<accession>P9WJF0</accession>
<accession>L0TDT1</accession>
<accession>P72056</accession>
<accession>Q7D4V3</accession>
<evidence type="ECO:0000250" key="1">
    <source>
        <dbReference type="UniProtKB" id="P9WJF1"/>
    </source>
</evidence>
<evidence type="ECO:0000255" key="2">
    <source>
        <dbReference type="PROSITE-ProRule" id="PRU00718"/>
    </source>
</evidence>
<evidence type="ECO:0000305" key="3"/>
<sequence>MLSVGATTTATRLTGWGRTAPSVANVLRTPDAEMIVKAVARVAESGGGRGAIARGLGRSYGDNAQNGGGLVIDMTPLNTIHSIDADTKLVDIDAGVNLDQLMKAALPFGLWVPVLPGTRQVTVGGAIACDIHGKNHHSAGSFGNHVRSMDLLTADGEIRHLTPTGEDAELFWATVGGNGLTGIIMRATIEMTPTSTAYFIADGDVTASLDETIALHSDGSEARYTYSSAWFDAISAPPKLGRAAVSRGRLATVEQLPAKLRSEPLKFDAPQLLTLPDVFPNGLANKYTFGPIGELWYRKSGTYRGKVQNLTQFYHPLDMFGEWNRAYGPAGFLQYQFVIPTEAVDEFKKIIGVIQASGHYSFLNVFKLFGPRNQAPLSFPIPGWNICVDFPIKDGLGKFVSELDRRVLEFGGRLYTAKDSRTTAETFHAMYPRVDEWISVRRKVDPLRVFASDMARRLELL</sequence>
<dbReference type="EC" id="1.1.98.3" evidence="1"/>
<dbReference type="EMBL" id="AE000516">
    <property type="protein sequence ID" value="AAK48263.1"/>
    <property type="status" value="ALT_INIT"/>
    <property type="molecule type" value="Genomic_DNA"/>
</dbReference>
<dbReference type="PIR" id="B70697">
    <property type="entry name" value="B70697"/>
</dbReference>
<dbReference type="RefSeq" id="WP_003420630.1">
    <property type="nucleotide sequence ID" value="NZ_KK341227.1"/>
</dbReference>
<dbReference type="SMR" id="P9WJF0"/>
<dbReference type="KEGG" id="mtc:MT3898"/>
<dbReference type="PATRIC" id="fig|83331.31.peg.4194"/>
<dbReference type="HOGENOM" id="CLU_032465_0_0_11"/>
<dbReference type="BRENDA" id="1.1.98.3">
    <property type="organism ID" value="3445"/>
</dbReference>
<dbReference type="UniPathway" id="UPA00963"/>
<dbReference type="Proteomes" id="UP000001020">
    <property type="component" value="Chromosome"/>
</dbReference>
<dbReference type="GO" id="GO:0016020">
    <property type="term" value="C:membrane"/>
    <property type="evidence" value="ECO:0007669"/>
    <property type="project" value="InterPro"/>
</dbReference>
<dbReference type="GO" id="GO:0042597">
    <property type="term" value="C:periplasmic space"/>
    <property type="evidence" value="ECO:0007669"/>
    <property type="project" value="UniProtKB-SubCell"/>
</dbReference>
<dbReference type="GO" id="GO:0003885">
    <property type="term" value="F:D-arabinono-1,4-lactone oxidase activity"/>
    <property type="evidence" value="ECO:0007669"/>
    <property type="project" value="InterPro"/>
</dbReference>
<dbReference type="GO" id="GO:0071949">
    <property type="term" value="F:FAD binding"/>
    <property type="evidence" value="ECO:0007669"/>
    <property type="project" value="InterPro"/>
</dbReference>
<dbReference type="GO" id="GO:0045227">
    <property type="term" value="P:capsule polysaccharide biosynthetic process"/>
    <property type="evidence" value="ECO:0007669"/>
    <property type="project" value="UniProtKB-UniPathway"/>
</dbReference>
<dbReference type="GO" id="GO:0071555">
    <property type="term" value="P:cell wall organization"/>
    <property type="evidence" value="ECO:0007669"/>
    <property type="project" value="UniProtKB-KW"/>
</dbReference>
<dbReference type="GO" id="GO:0046677">
    <property type="term" value="P:response to antibiotic"/>
    <property type="evidence" value="ECO:0007669"/>
    <property type="project" value="UniProtKB-KW"/>
</dbReference>
<dbReference type="FunFam" id="3.30.465.10:FF:000052">
    <property type="entry name" value="Decaprenylphosphoryl-beta-D-ribose oxidase"/>
    <property type="match status" value="1"/>
</dbReference>
<dbReference type="Gene3D" id="3.30.465.10">
    <property type="match status" value="1"/>
</dbReference>
<dbReference type="InterPro" id="IPR007173">
    <property type="entry name" value="ALO_C"/>
</dbReference>
<dbReference type="InterPro" id="IPR016166">
    <property type="entry name" value="FAD-bd_PCMH"/>
</dbReference>
<dbReference type="InterPro" id="IPR036318">
    <property type="entry name" value="FAD-bd_PCMH-like_sf"/>
</dbReference>
<dbReference type="InterPro" id="IPR016169">
    <property type="entry name" value="FAD-bd_PCMH_sub2"/>
</dbReference>
<dbReference type="InterPro" id="IPR010031">
    <property type="entry name" value="FAD_lactone_oxidase-like"/>
</dbReference>
<dbReference type="InterPro" id="IPR006094">
    <property type="entry name" value="Oxid_FAD_bind_N"/>
</dbReference>
<dbReference type="PANTHER" id="PTHR43762:SF1">
    <property type="entry name" value="D-ARABINONO-1,4-LACTONE OXIDASE"/>
    <property type="match status" value="1"/>
</dbReference>
<dbReference type="PANTHER" id="PTHR43762">
    <property type="entry name" value="L-GULONOLACTONE OXIDASE"/>
    <property type="match status" value="1"/>
</dbReference>
<dbReference type="Pfam" id="PF04030">
    <property type="entry name" value="ALO"/>
    <property type="match status" value="1"/>
</dbReference>
<dbReference type="Pfam" id="PF01565">
    <property type="entry name" value="FAD_binding_4"/>
    <property type="match status" value="1"/>
</dbReference>
<dbReference type="SUPFAM" id="SSF56176">
    <property type="entry name" value="FAD-binding/transporter-associated domain-like"/>
    <property type="match status" value="1"/>
</dbReference>
<dbReference type="PROSITE" id="PS51387">
    <property type="entry name" value="FAD_PCMH"/>
    <property type="match status" value="1"/>
</dbReference>
<name>DPRE1_MYCTO</name>
<reference key="1">
    <citation type="journal article" date="2002" name="J. Bacteriol.">
        <title>Whole-genome comparison of Mycobacterium tuberculosis clinical and laboratory strains.</title>
        <authorList>
            <person name="Fleischmann R.D."/>
            <person name="Alland D."/>
            <person name="Eisen J.A."/>
            <person name="Carpenter L."/>
            <person name="White O."/>
            <person name="Peterson J.D."/>
            <person name="DeBoy R.T."/>
            <person name="Dodson R.J."/>
            <person name="Gwinn M.L."/>
            <person name="Haft D.H."/>
            <person name="Hickey E.K."/>
            <person name="Kolonay J.F."/>
            <person name="Nelson W.C."/>
            <person name="Umayam L.A."/>
            <person name="Ermolaeva M.D."/>
            <person name="Salzberg S.L."/>
            <person name="Delcher A."/>
            <person name="Utterback T.R."/>
            <person name="Weidman J.F."/>
            <person name="Khouri H.M."/>
            <person name="Gill J."/>
            <person name="Mikula A."/>
            <person name="Bishai W."/>
            <person name="Jacobs W.R. Jr."/>
            <person name="Venter J.C."/>
            <person name="Fraser C.M."/>
        </authorList>
    </citation>
    <scope>NUCLEOTIDE SEQUENCE [LARGE SCALE GENOMIC DNA]</scope>
    <source>
        <strain>CDC 1551 / Oshkosh</strain>
    </source>
</reference>
<organism>
    <name type="scientific">Mycobacterium tuberculosis (strain CDC 1551 / Oshkosh)</name>
    <dbReference type="NCBI Taxonomy" id="83331"/>
    <lineage>
        <taxon>Bacteria</taxon>
        <taxon>Bacillati</taxon>
        <taxon>Actinomycetota</taxon>
        <taxon>Actinomycetes</taxon>
        <taxon>Mycobacteriales</taxon>
        <taxon>Mycobacteriaceae</taxon>
        <taxon>Mycobacterium</taxon>
        <taxon>Mycobacterium tuberculosis complex</taxon>
    </lineage>
</organism>
<protein>
    <recommendedName>
        <fullName evidence="1">Decaprenylphosphoryl-beta-D-ribose oxidase</fullName>
        <ecNumber evidence="1">1.1.98.3</ecNumber>
    </recommendedName>
    <alternativeName>
        <fullName evidence="1">Decaprenylphospho-beta-D-ribofuranose 2-dehydrogenase</fullName>
    </alternativeName>
    <alternativeName>
        <fullName evidence="1">Decaprenylphosphoryl-beta-D-ribofuranose 2'-epimerase subunit DprE1</fullName>
        <shortName evidence="1">Decaprenyl-phosphoribose 2'-epimerase subunit 1</shortName>
    </alternativeName>
    <alternativeName>
        <fullName evidence="3">Decaprenylphosphoryl-beta-D-ribofuranose 2'-oxidase</fullName>
    </alternativeName>
    <alternativeName>
        <fullName evidence="1">Decaprenylphosphoryl-beta-D-ribose 2-epimerase flavoprotein subunit</fullName>
    </alternativeName>
    <alternativeName>
        <fullName evidence="1">FAD-dependent decaprenylphosphoryl-beta-D-ribofuranose 2-oxidase</fullName>
    </alternativeName>
</protein>
<keyword id="KW-0046">Antibiotic resistance</keyword>
<keyword id="KW-0961">Cell wall biogenesis/degradation</keyword>
<keyword id="KW-0274">FAD</keyword>
<keyword id="KW-0285">Flavoprotein</keyword>
<keyword id="KW-0560">Oxidoreductase</keyword>
<keyword id="KW-0574">Periplasm</keyword>
<keyword id="KW-1185">Reference proteome</keyword>
<feature type="chain" id="PRO_0000427841" description="Decaprenylphosphoryl-beta-D-ribose oxidase">
    <location>
        <begin position="1"/>
        <end position="461"/>
    </location>
</feature>
<feature type="domain" description="FAD-binding PCMH-type" evidence="2">
    <location>
        <begin position="19"/>
        <end position="194"/>
    </location>
</feature>
<feature type="binding site" evidence="1">
    <location>
        <begin position="53"/>
        <end position="63"/>
    </location>
    <ligand>
        <name>FAD</name>
        <dbReference type="ChEBI" id="CHEBI:57692"/>
    </ligand>
</feature>
<feature type="binding site" evidence="1">
    <location>
        <position position="117"/>
    </location>
    <ligand>
        <name>FAD</name>
        <dbReference type="ChEBI" id="CHEBI:57692"/>
    </ligand>
</feature>
<feature type="binding site" evidence="1">
    <location>
        <begin position="122"/>
        <end position="125"/>
    </location>
    <ligand>
        <name>FAD</name>
        <dbReference type="ChEBI" id="CHEBI:57692"/>
    </ligand>
</feature>
<feature type="binding site" evidence="1">
    <location>
        <begin position="129"/>
        <end position="132"/>
    </location>
    <ligand>
        <name>FAD</name>
        <dbReference type="ChEBI" id="CHEBI:57692"/>
    </ligand>
</feature>
<feature type="binding site" evidence="1">
    <location>
        <position position="184"/>
    </location>
    <ligand>
        <name>FAD</name>
        <dbReference type="ChEBI" id="CHEBI:57692"/>
    </ligand>
</feature>
<feature type="binding site" evidence="1">
    <location>
        <position position="415"/>
    </location>
    <ligand>
        <name>FAD</name>
        <dbReference type="ChEBI" id="CHEBI:57692"/>
    </ligand>
</feature>
<comment type="function">
    <text evidence="1">Component of the DprE1-DprE2 complex that catalyzes the 2-step epimerization of decaprenyl-phospho-ribose (DPR) to decaprenyl-phospho-arabinose (DPA), a key precursor that serves as the arabinose donor required for the synthesis of cell-wall arabinans. DprE1 catalyzes the first step of epimerization, namely FAD-dependent oxidation of the C2' hydroxyl of DPR to yield the keto intermediate decaprenyl-phospho-2'-keto-D-arabinose (DPX). The intermediate DPX is then transferred to DprE2 subunit of the epimerase complex, most probably through a 'substrate channel' at the interface of DprE1-DprE2 complex. Can also use farnesyl-phosphoryl-beta-D-ribofuranose (FPR) as substrate in vitro.</text>
</comment>
<comment type="function">
    <text evidence="1">DprE1 is a highly vulnerable and fully validated tuberculosis drug target.</text>
</comment>
<comment type="catalytic activity">
    <reaction evidence="1">
        <text>trans,octa-cis-decaprenylphospho-beta-D-ribofuranose + FAD + H(+) = trans,octa-cis-decaprenylphospho-beta-D-erythro-pentofuranosid-2-ulose + FADH2</text>
        <dbReference type="Rhea" id="RHEA:33899"/>
        <dbReference type="ChEBI" id="CHEBI:15378"/>
        <dbReference type="ChEBI" id="CHEBI:57692"/>
        <dbReference type="ChEBI" id="CHEBI:58307"/>
        <dbReference type="ChEBI" id="CHEBI:65067"/>
        <dbReference type="ChEBI" id="CHEBI:66881"/>
        <dbReference type="EC" id="1.1.98.3"/>
    </reaction>
</comment>
<comment type="activity regulation">
    <text evidence="1">Is inhibited by 8-nitro-benzothiazinones (BTZs) such as BTZ043 and PBTZ169; BTZs are a new class of antimycobacterial agents that kill M.tuberculosis in vitro, ex vivo, and in mouse models of tuberculosis. Is also inhibited by dinitrobenzamide derivatives (DNBs), which thus block formation of both cell-wall lipoarabinomannan and arabinogalactan via inhibition of decaprenyl-phospho-arabinose (DPA) synthesis; DNBs show high activity against intracellular growth of M.tuberculosis inside macrophages, including extensively drug resistant (XDR) strains. BTZs and DNBs are suicide inhibitors that act via covalent modification of DprE1; the essential nitro group of these compounds is reduced by DprE1 to a nitroso group, which then specifically reacts with Cys-387 of DprE1 to form an irreversible semimercaptal adduct. Many other compounds with diverse scaffolds were found to act as either covalent (e.g. nitroquinoxalines, nitroimidazoles) or non-covalent (e.g. the benzothiazole derivative TCA1, the 2-carboxyquinoxaline Ty38C, 8-pyrrole-benzothiazinones, 1,4-azaindoles, pyrazolopyridones, 4-aminoquinolone piperidine amides) DprE1 inhibitors.</text>
</comment>
<comment type="pathway">
    <text evidence="1">Cell wall biogenesis; cell wall polysaccharide biosynthesis.</text>
</comment>
<comment type="subunit">
    <text evidence="1">Monomer. Although forming apparent dimer in crystals, DprE1 does not dimerize appreciably in solution. Interacts with DprE2 to form an epimerase complex.</text>
</comment>
<comment type="subcellular location">
    <subcellularLocation>
        <location evidence="1">Periplasm</location>
    </subcellularLocation>
</comment>
<comment type="similarity">
    <text evidence="3">Belongs to the DprE1 family.</text>
</comment>
<comment type="sequence caution" evidence="3">
    <conflict type="erroneous initiation">
        <sequence resource="EMBL-CDS" id="AAK48263"/>
    </conflict>
</comment>
<proteinExistence type="inferred from homology"/>
<gene>
    <name evidence="1" type="primary">dprE1</name>
    <name type="ordered locus">MT3898</name>
</gene>